<keyword id="KW-0002">3D-structure</keyword>
<keyword id="KW-0007">Acetylation</keyword>
<keyword id="KW-0903">Direct protein sequencing</keyword>
<keyword id="KW-0227">DNA damage</keyword>
<keyword id="KW-0234">DNA repair</keyword>
<keyword id="KW-0479">Metal-binding</keyword>
<keyword id="KW-0539">Nucleus</keyword>
<keyword id="KW-1185">Reference proteome</keyword>
<keyword id="KW-0804">Transcription</keyword>
<keyword id="KW-0805">Transcription regulation</keyword>
<keyword id="KW-0862">Zinc</keyword>
<keyword id="KW-0863">Zinc-finger</keyword>
<accession>Q12004</accession>
<accession>D6W462</accession>
<name>TFB4_YEAST</name>
<organism>
    <name type="scientific">Saccharomyces cerevisiae (strain ATCC 204508 / S288c)</name>
    <name type="common">Baker's yeast</name>
    <dbReference type="NCBI Taxonomy" id="559292"/>
    <lineage>
        <taxon>Eukaryota</taxon>
        <taxon>Fungi</taxon>
        <taxon>Dikarya</taxon>
        <taxon>Ascomycota</taxon>
        <taxon>Saccharomycotina</taxon>
        <taxon>Saccharomycetes</taxon>
        <taxon>Saccharomycetales</taxon>
        <taxon>Saccharomycetaceae</taxon>
        <taxon>Saccharomyces</taxon>
    </lineage>
</organism>
<protein>
    <recommendedName>
        <fullName>General transcription and DNA repair factor IIH subunit TFB4</fullName>
        <shortName>TFIIH subunit TFB4</shortName>
    </recommendedName>
    <alternativeName>
        <fullName>RNA polymerase II transcription factor B 34 kDa subunit</fullName>
    </alternativeName>
    <alternativeName>
        <fullName>RNA polymerase II transcription factor B p34 subunit</fullName>
    </alternativeName>
    <alternativeName>
        <fullName>RNA polymerase II transcription factor B subunit 4</fullName>
    </alternativeName>
</protein>
<sequence length="338" mass="37457">MDAISDPTFKHARSRKQVTEESPSLLTVIIEIAPKLWTTFDEEGNEKGSIIKVLEALIVFLNAHLAFNSANKVAVIAAYSQGIKYLYPESTSALKASESENKTRSDLKIINSDMYRRFRNVDETLVEEIYKLFELEKKQIEQNSQRSTLAGAMSAGLTYVNRISKESVTTSLKSRLLVLTCGSGSSKDEIFQYIPIMNCIFSATKMKCPIDVVKIGGSKESTFLQQTTDATNGVYLHVESTEGLIQYLATAMFIDPSLRPIIVKPNHGSVDFRTSCYLTGRVVAVGFICSVCLCVLSIIPPGNKCPACDSQFDEHVIAKLKRKPVVPRLKAKKKVTKP</sequence>
<evidence type="ECO:0000250" key="1"/>
<evidence type="ECO:0000269" key="2">
    <source>
    </source>
</evidence>
<evidence type="ECO:0000269" key="3">
    <source>
    </source>
</evidence>
<evidence type="ECO:0000269" key="4">
    <source>
    </source>
</evidence>
<evidence type="ECO:0000269" key="5">
    <source>
    </source>
</evidence>
<evidence type="ECO:0000269" key="6">
    <source>
    </source>
</evidence>
<evidence type="ECO:0000269" key="7">
    <source>
    </source>
</evidence>
<evidence type="ECO:0000269" key="8">
    <source>
    </source>
</evidence>
<evidence type="ECO:0000269" key="9">
    <source>
    </source>
</evidence>
<evidence type="ECO:0000269" key="10">
    <source>
    </source>
</evidence>
<evidence type="ECO:0000269" key="11">
    <source>
    </source>
</evidence>
<evidence type="ECO:0000269" key="12">
    <source>
    </source>
</evidence>
<evidence type="ECO:0000269" key="13">
    <source>
    </source>
</evidence>
<evidence type="ECO:0000269" key="14">
    <source>
    </source>
</evidence>
<evidence type="ECO:0000305" key="15"/>
<evidence type="ECO:0007744" key="16">
    <source>
        <dbReference type="PDB" id="5OQJ"/>
    </source>
</evidence>
<evidence type="ECO:0007744" key="17">
    <source>
        <dbReference type="PDB" id="5OQM"/>
    </source>
</evidence>
<evidence type="ECO:0007744" key="18">
    <source>
        <dbReference type="PDB" id="6GYM"/>
    </source>
</evidence>
<evidence type="ECO:0007744" key="19">
    <source>
        <dbReference type="PDB" id="7K01"/>
    </source>
</evidence>
<evidence type="ECO:0007744" key="20">
    <source>
        <dbReference type="PDB" id="7K04"/>
    </source>
</evidence>
<evidence type="ECO:0007744" key="21">
    <source>
        <dbReference type="PDB" id="7M2U"/>
    </source>
</evidence>
<evidence type="ECO:0007744" key="22">
    <source>
        <dbReference type="PDB" id="7ML0"/>
    </source>
</evidence>
<evidence type="ECO:0007744" key="23">
    <source>
        <dbReference type="PDB" id="7ML1"/>
    </source>
</evidence>
<evidence type="ECO:0007744" key="24">
    <source>
        <dbReference type="PDB" id="7ML2"/>
    </source>
</evidence>
<evidence type="ECO:0007744" key="25">
    <source>
        <dbReference type="PDB" id="7ML3"/>
    </source>
</evidence>
<evidence type="ECO:0007744" key="26">
    <source>
        <dbReference type="PDB" id="7ML4"/>
    </source>
</evidence>
<evidence type="ECO:0007744" key="27">
    <source>
        <dbReference type="PDB" id="7O4I"/>
    </source>
</evidence>
<evidence type="ECO:0007744" key="28">
    <source>
        <dbReference type="PDB" id="7O4J"/>
    </source>
</evidence>
<evidence type="ECO:0007744" key="29">
    <source>
        <dbReference type="PDB" id="7O4K"/>
    </source>
</evidence>
<evidence type="ECO:0007744" key="30">
    <source>
        <dbReference type="PDB" id="7O4L"/>
    </source>
</evidence>
<evidence type="ECO:0007744" key="31">
    <source>
        <dbReference type="PDB" id="7O72"/>
    </source>
</evidence>
<evidence type="ECO:0007744" key="32">
    <source>
        <dbReference type="PDB" id="7O73"/>
    </source>
</evidence>
<evidence type="ECO:0007744" key="33">
    <source>
        <dbReference type="PDB" id="7O75"/>
    </source>
</evidence>
<evidence type="ECO:0007744" key="34">
    <source>
        <dbReference type="PDB" id="7ZS9"/>
    </source>
</evidence>
<evidence type="ECO:0007744" key="35">
    <source>
        <dbReference type="PDB" id="7ZSA"/>
    </source>
</evidence>
<evidence type="ECO:0007744" key="36">
    <source>
        <dbReference type="PDB" id="7ZSB"/>
    </source>
</evidence>
<evidence type="ECO:0007744" key="37">
    <source>
        <dbReference type="PDB" id="8CEO"/>
    </source>
</evidence>
<evidence type="ECO:0007744" key="38">
    <source>
    </source>
</evidence>
<evidence type="ECO:0007829" key="39">
    <source>
        <dbReference type="PDB" id="7ML0"/>
    </source>
</evidence>
<evidence type="ECO:0007829" key="40">
    <source>
        <dbReference type="PDB" id="7ML4"/>
    </source>
</evidence>
<evidence type="ECO:0007829" key="41">
    <source>
        <dbReference type="PDB" id="7O4J"/>
    </source>
</evidence>
<evidence type="ECO:0007829" key="42">
    <source>
        <dbReference type="PDB" id="7ZS9"/>
    </source>
</evidence>
<proteinExistence type="evidence at protein level"/>
<comment type="function">
    <text evidence="2 12 13">Component of the general transcription and DNA repair factor IIH (TFIIH) core complex, which is involved in general and transcription-coupled nucleotide excision repair (NER) of damaged DNA and, when complexed to TFIIK, in RNA transcription by RNA polymerase II. In NER, TFIIH acts by opening DNA around the lesion to allow the excision of the damaged oligonucleotide and its replacement by a new DNA fragment. In transcription, TFIIH has an essential role in transcription initiation. When the pre-initiation complex (PIC) has been established, TFIIH is required for promoter opening and promoter escape. Phosphorylation of the C-terminal tail (CTD) of the largest subunit of RNA polymerase II by the kinase module TFIIK controls the initiation of transcription.</text>
</comment>
<comment type="subunit">
    <text evidence="3 4 5 6 7 8 9 10 11 12 14">Component of the 7-subunit TFIIH core complex composed of XPB/SSL2, XPD/RAD3, SSL1, TFB1, TFB2, TFB4 and TFB5, which is active in NER. The core complex associates with the 3-subunit CTD-kinase module TFIIK composed of CCL1, KIN28 and TFB3 to form the 10-subunit holoenzyme (holo-TFIIH) active in transcription (PubMed:7961739, PubMed:9235928, PubMed:14500720, PubMed:29088706, PubMed:30472190, PubMed:34133942, PubMed:34099686, PubMed:35051353, PubMed:36411341, PubMed:37014863). An additionnal subunit, TFB6, plays a role in the dissociation of the SSL2 helicase from TFIIH after transcription initiation (PubMed:22411836).</text>
</comment>
<comment type="subcellular location">
    <subcellularLocation>
        <location evidence="1">Nucleus</location>
    </subcellularLocation>
</comment>
<comment type="similarity">
    <text evidence="15">Belongs to the TFB4 family.</text>
</comment>
<reference key="1">
    <citation type="journal article" date="1997" name="Nature">
        <title>The nucleotide sequence of Saccharomyces cerevisiae chromosome XVI.</title>
        <authorList>
            <person name="Bussey H."/>
            <person name="Storms R.K."/>
            <person name="Ahmed A."/>
            <person name="Albermann K."/>
            <person name="Allen E."/>
            <person name="Ansorge W."/>
            <person name="Araujo R."/>
            <person name="Aparicio A."/>
            <person name="Barrell B.G."/>
            <person name="Badcock K."/>
            <person name="Benes V."/>
            <person name="Botstein D."/>
            <person name="Bowman S."/>
            <person name="Brueckner M."/>
            <person name="Carpenter J."/>
            <person name="Cherry J.M."/>
            <person name="Chung E."/>
            <person name="Churcher C.M."/>
            <person name="Coster F."/>
            <person name="Davis K."/>
            <person name="Davis R.W."/>
            <person name="Dietrich F.S."/>
            <person name="Delius H."/>
            <person name="DiPaolo T."/>
            <person name="Dubois E."/>
            <person name="Duesterhoeft A."/>
            <person name="Duncan M."/>
            <person name="Floeth M."/>
            <person name="Fortin N."/>
            <person name="Friesen J.D."/>
            <person name="Fritz C."/>
            <person name="Goffeau A."/>
            <person name="Hall J."/>
            <person name="Hebling U."/>
            <person name="Heumann K."/>
            <person name="Hilbert H."/>
            <person name="Hillier L.W."/>
            <person name="Hunicke-Smith S."/>
            <person name="Hyman R.W."/>
            <person name="Johnston M."/>
            <person name="Kalman S."/>
            <person name="Kleine K."/>
            <person name="Komp C."/>
            <person name="Kurdi O."/>
            <person name="Lashkari D."/>
            <person name="Lew H."/>
            <person name="Lin A."/>
            <person name="Lin D."/>
            <person name="Louis E.J."/>
            <person name="Marathe R."/>
            <person name="Messenguy F."/>
            <person name="Mewes H.-W."/>
            <person name="Mirtipati S."/>
            <person name="Moestl D."/>
            <person name="Mueller-Auer S."/>
            <person name="Namath A."/>
            <person name="Nentwich U."/>
            <person name="Oefner P."/>
            <person name="Pearson D."/>
            <person name="Petel F.X."/>
            <person name="Pohl T.M."/>
            <person name="Purnelle B."/>
            <person name="Rajandream M.A."/>
            <person name="Rechmann S."/>
            <person name="Rieger M."/>
            <person name="Riles L."/>
            <person name="Roberts D."/>
            <person name="Schaefer M."/>
            <person name="Scharfe M."/>
            <person name="Scherens B."/>
            <person name="Schramm S."/>
            <person name="Schroeder M."/>
            <person name="Sdicu A.-M."/>
            <person name="Tettelin H."/>
            <person name="Urrestarazu L.A."/>
            <person name="Ushinsky S."/>
            <person name="Vierendeels F."/>
            <person name="Vissers S."/>
            <person name="Voss H."/>
            <person name="Walsh S.V."/>
            <person name="Wambutt R."/>
            <person name="Wang Y."/>
            <person name="Wedler E."/>
            <person name="Wedler H."/>
            <person name="Winnett E."/>
            <person name="Zhong W.-W."/>
            <person name="Zollner A."/>
            <person name="Vo D.H."/>
            <person name="Hani J."/>
        </authorList>
    </citation>
    <scope>NUCLEOTIDE SEQUENCE [LARGE SCALE GENOMIC DNA]</scope>
    <source>
        <strain>ATCC 204508 / S288c</strain>
    </source>
</reference>
<reference key="2">
    <citation type="journal article" date="2014" name="G3 (Bethesda)">
        <title>The reference genome sequence of Saccharomyces cerevisiae: Then and now.</title>
        <authorList>
            <person name="Engel S.R."/>
            <person name="Dietrich F.S."/>
            <person name="Fisk D.G."/>
            <person name="Binkley G."/>
            <person name="Balakrishnan R."/>
            <person name="Costanzo M.C."/>
            <person name="Dwight S.S."/>
            <person name="Hitz B.C."/>
            <person name="Karra K."/>
            <person name="Nash R.S."/>
            <person name="Weng S."/>
            <person name="Wong E.D."/>
            <person name="Lloyd P."/>
            <person name="Skrzypek M.S."/>
            <person name="Miyasato S.R."/>
            <person name="Simison M."/>
            <person name="Cherry J.M."/>
        </authorList>
    </citation>
    <scope>GENOME REANNOTATION</scope>
    <source>
        <strain>ATCC 204508 / S288c</strain>
    </source>
</reference>
<reference key="3">
    <citation type="journal article" date="2003" name="J. Biol. Chem.">
        <title>Revised subunit structure of yeast transcription factor IIH (TFIIH) and reconciliation with human TFIIH.</title>
        <authorList>
            <person name="Takagi Y."/>
            <person name="Komori H."/>
            <person name="Chang W.-H."/>
            <person name="Hudmon A."/>
            <person name="Erdjument-Bromage H."/>
            <person name="Tempst P."/>
            <person name="Kornberg R.D."/>
        </authorList>
    </citation>
    <scope>PROTEIN SEQUENCE OF 73-84; 111-131 AND 147-162</scope>
    <scope>IDENTIFICATION IN THE TFIIH CORE COMPLEX</scope>
</reference>
<reference key="4">
    <citation type="journal article" date="1994" name="J. Biol. Chem.">
        <title>RNA polymerase transcription factor IIH holoenzyme from yeast.</title>
        <authorList>
            <person name="Svejstrup J.Q."/>
            <person name="Feaver W.J."/>
            <person name="LaPointe J."/>
            <person name="Kornberg R.D."/>
        </authorList>
    </citation>
    <scope>FUNCTION OF TFIIH IN RNA POLYMERASE II TRANSCRIPTION</scope>
</reference>
<reference key="5">
    <citation type="journal article" date="1996" name="J. Biol. Chem.">
        <title>Reconstitution of TFIIH and requirement of its DNA helicase subunits, Rad3 and Rad25, in the incision step of nucleotide excision repair.</title>
        <authorList>
            <person name="Sung P."/>
            <person name="Guzder S.N."/>
            <person name="Prakash L."/>
            <person name="Prakash S."/>
        </authorList>
    </citation>
    <scope>FUNCTION OF THE TFIIH CORE COMPLEX IN DNA REPAIR</scope>
</reference>
<reference key="6">
    <citation type="journal article" date="1997" name="J. Biol. Chem.">
        <title>Genes for Tfb2, Tfb3, and Tfb4 subunits of yeast transcription/repair factor IIH. Homology to human cyclin-dependent kinase activating kinase and IIH subunits.</title>
        <authorList>
            <person name="Feaver W.J."/>
            <person name="Henry N.L."/>
            <person name="Wang Z."/>
            <person name="Wu X."/>
            <person name="Svejstrup J.Q."/>
            <person name="Bushnell D.A."/>
            <person name="Friedberg E.C."/>
            <person name="Kornberg R.D."/>
        </authorList>
    </citation>
    <scope>IDENTIFICATION IN THE TFIIH COMPLEX</scope>
</reference>
<reference key="7">
    <citation type="journal article" date="1999" name="J. Biol. Chem.">
        <title>The TFB4 subunit of yeast TFIIH is required for both nucleotide excision repair and RNA polymerase II transcription.</title>
        <authorList>
            <person name="Feaver W.J."/>
            <person name="Huang W."/>
            <person name="Friedberg E.C."/>
        </authorList>
    </citation>
    <scope>FUNCTION</scope>
</reference>
<reference key="8">
    <citation type="journal article" date="2012" name="Proc. Natl. Acad. Sci. U.S.A.">
        <title>Tfb6, a previously unidentified subunit of the general transcription factor TFIIH, facilitates dissociation of Ssl2 helicase after transcription initiation.</title>
        <authorList>
            <person name="Murakami K."/>
            <person name="Gibbons B.J."/>
            <person name="Davis R.E."/>
            <person name="Nagai S."/>
            <person name="Liu X."/>
            <person name="Robinson P.J."/>
            <person name="Wu T."/>
            <person name="Kaplan C.D."/>
            <person name="Kornberg R.D."/>
        </authorList>
    </citation>
    <scope>IDENTIFICATION BY MASS SPECTROMETRY</scope>
    <scope>SUBUNIT</scope>
</reference>
<reference key="9">
    <citation type="journal article" date="2012" name="Proc. Natl. Acad. Sci. U.S.A.">
        <title>N-terminal acetylome analyses and functional insights of the N-terminal acetyltransferase NatB.</title>
        <authorList>
            <person name="Van Damme P."/>
            <person name="Lasa M."/>
            <person name="Polevoda B."/>
            <person name="Gazquez C."/>
            <person name="Elosegui-Artola A."/>
            <person name="Kim D.S."/>
            <person name="De Juan-Pardo E."/>
            <person name="Demeyer K."/>
            <person name="Hole K."/>
            <person name="Larrea E."/>
            <person name="Timmerman E."/>
            <person name="Prieto J."/>
            <person name="Arnesen T."/>
            <person name="Sherman F."/>
            <person name="Gevaert K."/>
            <person name="Aldabe R."/>
        </authorList>
    </citation>
    <scope>ACETYLATION [LARGE SCALE ANALYSIS] AT MET-1</scope>
    <scope>IDENTIFICATION BY MASS SPECTROMETRY [LARGE SCALE ANALYSIS]</scope>
</reference>
<reference evidence="16 17" key="10">
    <citation type="journal article" date="2017" name="Nature">
        <title>Structures of transcription pre-initiation complex with TFIIH and Mediator.</title>
        <authorList>
            <person name="Schilbach S."/>
            <person name="Hantsche M."/>
            <person name="Tegunov D."/>
            <person name="Dienemann C."/>
            <person name="Wigge C."/>
            <person name="Urlaub H."/>
            <person name="Cramer P."/>
        </authorList>
    </citation>
    <scope>STRUCTURE BY ELECTRON MICROSCOPY (4.70 ANGSTROMS)</scope>
    <scope>SUBUNIT</scope>
</reference>
<reference evidence="18" key="11">
    <citation type="journal article" date="2019" name="Mol. Cell">
        <title>Promoter Distortion and Opening in the RNA Polymerase II Cleft.</title>
        <authorList>
            <person name="Dienemann C."/>
            <person name="Schwalb B."/>
            <person name="Schilbach S."/>
            <person name="Cramer P."/>
        </authorList>
    </citation>
    <scope>STRUCTURE BY ELECTRON MICROSCOPY (6.70 ANGSTROMS)</scope>
    <scope>SUBUNIT</scope>
</reference>
<reference evidence="27 28 29 30 31 32 33" key="12">
    <citation type="journal article" date="2021" name="Cell">
        <title>Structure of RNA polymerase II pre-initiation complex at 2.9A defines initial DNA opening.</title>
        <authorList>
            <person name="Schilbach S."/>
            <person name="Aibara S."/>
            <person name="Dienemann C."/>
            <person name="Grabbe F."/>
            <person name="Cramer P."/>
        </authorList>
    </citation>
    <scope>STRUCTURE BY ELECTRON MICROSCOPY (2.90 ANGSTROMS)</scope>
    <scope>SUBUNIT</scope>
</reference>
<reference evidence="19 20 21" key="13">
    <citation type="journal article" date="2021" name="Nat. Commun.">
        <title>Cryo-EM structure of TFIIH/Rad4-Rad23-Rad33 in damaged DNA opening in nucleotide excision repair.</title>
        <authorList>
            <person name="van Eeuwen T."/>
            <person name="Shim Y."/>
            <person name="Kim H.J."/>
            <person name="Zhao T."/>
            <person name="Basu S."/>
            <person name="Garcia B.A."/>
            <person name="Kaplan C.D."/>
            <person name="Min J.H."/>
            <person name="Murakami K."/>
        </authorList>
    </citation>
    <scope>STRUCTURE BY ELECTRON MICROSCOPY (3.90 ANGSTROMS)</scope>
    <scope>SUBUNIT</scope>
</reference>
<reference evidence="22 23 24 25 26" key="14">
    <citation type="journal article" date="2022" name="Mol. Cell">
        <title>Structural visualization of de novo transcription initiation by Saccharomyces cerevisiae RNA polymerase II.</title>
        <authorList>
            <person name="Yang C."/>
            <person name="Fujiwara R."/>
            <person name="Kim H.J."/>
            <person name="Basnet P."/>
            <person name="Zhu Y."/>
            <person name="Gorbea Colon J.J."/>
            <person name="Steimle S."/>
            <person name="Garcia B.A."/>
            <person name="Kaplan C.D."/>
            <person name="Murakami K."/>
        </authorList>
    </citation>
    <scope>STRUCTURE BY ELECTRON MICROSCOPY (3.00 ANGSTROMS)</scope>
    <scope>SUBUNIT</scope>
</reference>
<reference evidence="34 35 36" key="15">
    <citation type="journal article" date="2023" name="Nat. Struct. Mol. Biol.">
        <title>Structures of transcription preinitiation complex engaged with the +1 nucleosome.</title>
        <authorList>
            <person name="Wang H."/>
            <person name="Schilbach S."/>
            <person name="Ninov M."/>
            <person name="Urlaub H."/>
            <person name="Cramer P."/>
        </authorList>
    </citation>
    <scope>STRUCTURE BY ELECTRON MICROSCOPY (3.10 ANGSTROMS)</scope>
    <scope>SUBUNIT</scope>
</reference>
<reference evidence="37" key="16">
    <citation type="journal article" date="2023" name="Proc. Natl. Acad. Sci. U.S.A.">
        <title>Yeast PIC-Mediator structure with RNA polymerase II C-terminal domain.</title>
        <authorList>
            <person name="Schilbach S."/>
            <person name="Wang H."/>
            <person name="Dienemann C."/>
            <person name="Cramer P."/>
        </authorList>
    </citation>
    <scope>STRUCTURE BY ELECTRON MICROSCOPY (3.60 ANGSTROMS)</scope>
    <scope>SUBUNIT</scope>
</reference>
<dbReference type="EMBL" id="Z71255">
    <property type="protein sequence ID" value="CAA95001.1"/>
    <property type="molecule type" value="Genomic_DNA"/>
</dbReference>
<dbReference type="EMBL" id="Z49219">
    <property type="protein sequence ID" value="CAA89174.1"/>
    <property type="molecule type" value="Genomic_DNA"/>
</dbReference>
<dbReference type="EMBL" id="BK006949">
    <property type="protein sequence ID" value="DAA11478.1"/>
    <property type="molecule type" value="Genomic_DNA"/>
</dbReference>
<dbReference type="PIR" id="S54078">
    <property type="entry name" value="S54078"/>
</dbReference>
<dbReference type="RefSeq" id="NP_015381.1">
    <property type="nucleotide sequence ID" value="NM_001184153.1"/>
</dbReference>
<dbReference type="PDB" id="5OQJ">
    <property type="method" value="EM"/>
    <property type="resolution" value="4.70 A"/>
    <property type="chains" value="4=1-338"/>
</dbReference>
<dbReference type="PDB" id="5OQM">
    <property type="method" value="EM"/>
    <property type="resolution" value="5.80 A"/>
    <property type="chains" value="4=1-338"/>
</dbReference>
<dbReference type="PDB" id="6GYM">
    <property type="method" value="EM"/>
    <property type="resolution" value="6.70 A"/>
    <property type="chains" value="4=1-338"/>
</dbReference>
<dbReference type="PDB" id="7K01">
    <property type="method" value="EM"/>
    <property type="resolution" value="3.90 A"/>
    <property type="chains" value="4=1-338"/>
</dbReference>
<dbReference type="PDB" id="7K04">
    <property type="method" value="EM"/>
    <property type="resolution" value="9.25 A"/>
    <property type="chains" value="4=1-338"/>
</dbReference>
<dbReference type="PDB" id="7M2U">
    <property type="method" value="EM"/>
    <property type="resolution" value="8.20 A"/>
    <property type="chains" value="4=1-338"/>
</dbReference>
<dbReference type="PDB" id="7ML0">
    <property type="method" value="EM"/>
    <property type="resolution" value="3.00 A"/>
    <property type="chains" value="4=1-338"/>
</dbReference>
<dbReference type="PDB" id="7ML1">
    <property type="method" value="EM"/>
    <property type="resolution" value="4.00 A"/>
    <property type="chains" value="4=1-338"/>
</dbReference>
<dbReference type="PDB" id="7ML2">
    <property type="method" value="EM"/>
    <property type="resolution" value="3.40 A"/>
    <property type="chains" value="4=1-338"/>
</dbReference>
<dbReference type="PDB" id="7ML3">
    <property type="method" value="EM"/>
    <property type="resolution" value="7.60 A"/>
    <property type="chains" value="4=1-338"/>
</dbReference>
<dbReference type="PDB" id="7ML4">
    <property type="method" value="EM"/>
    <property type="resolution" value="3.10 A"/>
    <property type="chains" value="4=1-338"/>
</dbReference>
<dbReference type="PDB" id="7O4I">
    <property type="method" value="EM"/>
    <property type="resolution" value="3.20 A"/>
    <property type="chains" value="4=1-338"/>
</dbReference>
<dbReference type="PDB" id="7O4J">
    <property type="method" value="EM"/>
    <property type="resolution" value="2.90 A"/>
    <property type="chains" value="4=1-338"/>
</dbReference>
<dbReference type="PDB" id="7O4K">
    <property type="method" value="EM"/>
    <property type="resolution" value="3.60 A"/>
    <property type="chains" value="4=1-338"/>
</dbReference>
<dbReference type="PDB" id="7O4L">
    <property type="method" value="EM"/>
    <property type="resolution" value="3.40 A"/>
    <property type="chains" value="4=1-338"/>
</dbReference>
<dbReference type="PDB" id="7O72">
    <property type="method" value="EM"/>
    <property type="resolution" value="3.40 A"/>
    <property type="chains" value="4=1-338"/>
</dbReference>
<dbReference type="PDB" id="7O73">
    <property type="method" value="EM"/>
    <property type="resolution" value="3.40 A"/>
    <property type="chains" value="4=1-338"/>
</dbReference>
<dbReference type="PDB" id="7O75">
    <property type="method" value="EM"/>
    <property type="resolution" value="3.20 A"/>
    <property type="chains" value="4=1-338"/>
</dbReference>
<dbReference type="PDB" id="7ZS9">
    <property type="method" value="EM"/>
    <property type="resolution" value="3.10 A"/>
    <property type="chains" value="4=1-338"/>
</dbReference>
<dbReference type="PDB" id="7ZSA">
    <property type="method" value="EM"/>
    <property type="resolution" value="4.00 A"/>
    <property type="chains" value="4=1-338"/>
</dbReference>
<dbReference type="PDB" id="7ZSB">
    <property type="method" value="EM"/>
    <property type="resolution" value="6.60 A"/>
    <property type="chains" value="4=1-338"/>
</dbReference>
<dbReference type="PDB" id="8CEN">
    <property type="method" value="EM"/>
    <property type="resolution" value="3.00 A"/>
    <property type="chains" value="4=1-338"/>
</dbReference>
<dbReference type="PDB" id="8CEO">
    <property type="method" value="EM"/>
    <property type="resolution" value="3.60 A"/>
    <property type="chains" value="4=1-338"/>
</dbReference>
<dbReference type="PDB" id="8UMH">
    <property type="method" value="EM"/>
    <property type="resolution" value="4.10 A"/>
    <property type="chains" value="4=1-338"/>
</dbReference>
<dbReference type="PDB" id="8UMI">
    <property type="method" value="EM"/>
    <property type="resolution" value="3.70 A"/>
    <property type="chains" value="4=1-338"/>
</dbReference>
<dbReference type="PDB" id="8UOQ">
    <property type="method" value="EM"/>
    <property type="resolution" value="3.80 A"/>
    <property type="chains" value="4=1-338"/>
</dbReference>
<dbReference type="PDB" id="8UOT">
    <property type="method" value="EM"/>
    <property type="resolution" value="3.70 A"/>
    <property type="chains" value="4=1-338"/>
</dbReference>
<dbReference type="PDBsum" id="5OQJ"/>
<dbReference type="PDBsum" id="5OQM"/>
<dbReference type="PDBsum" id="6GYM"/>
<dbReference type="PDBsum" id="7K01"/>
<dbReference type="PDBsum" id="7K04"/>
<dbReference type="PDBsum" id="7M2U"/>
<dbReference type="PDBsum" id="7ML0"/>
<dbReference type="PDBsum" id="7ML1"/>
<dbReference type="PDBsum" id="7ML2"/>
<dbReference type="PDBsum" id="7ML3"/>
<dbReference type="PDBsum" id="7ML4"/>
<dbReference type="PDBsum" id="7O4I"/>
<dbReference type="PDBsum" id="7O4J"/>
<dbReference type="PDBsum" id="7O4K"/>
<dbReference type="PDBsum" id="7O4L"/>
<dbReference type="PDBsum" id="7O72"/>
<dbReference type="PDBsum" id="7O73"/>
<dbReference type="PDBsum" id="7O75"/>
<dbReference type="PDBsum" id="7ZS9"/>
<dbReference type="PDBsum" id="7ZSA"/>
<dbReference type="PDBsum" id="7ZSB"/>
<dbReference type="PDBsum" id="8CEN"/>
<dbReference type="PDBsum" id="8CEO"/>
<dbReference type="PDBsum" id="8UMH"/>
<dbReference type="PDBsum" id="8UMI"/>
<dbReference type="PDBsum" id="8UOQ"/>
<dbReference type="PDBsum" id="8UOT"/>
<dbReference type="EMDB" id="EMD-0092"/>
<dbReference type="EMDB" id="EMD-12719"/>
<dbReference type="EMDB" id="EMD-12720"/>
<dbReference type="EMDB" id="EMD-12721"/>
<dbReference type="EMDB" id="EMD-12722"/>
<dbReference type="EMDB" id="EMD-12743"/>
<dbReference type="EMDB" id="EMD-12744"/>
<dbReference type="EMDB" id="EMD-12745"/>
<dbReference type="EMDB" id="EMD-14927"/>
<dbReference type="EMDB" id="EMD-14928"/>
<dbReference type="EMDB" id="EMD-14929"/>
<dbReference type="EMDB" id="EMD-22587"/>
<dbReference type="EMDB" id="EMD-22588"/>
<dbReference type="EMDB" id="EMD-23905"/>
<dbReference type="EMDB" id="EMD-23906"/>
<dbReference type="EMDB" id="EMD-3846"/>
<dbReference type="EMDB" id="EMD-3850"/>
<dbReference type="EMDB" id="EMD-42437"/>
<dbReference type="EMDB" id="EMD-42438"/>
<dbReference type="SMR" id="Q12004"/>
<dbReference type="BioGRID" id="36230">
    <property type="interactions" value="159"/>
</dbReference>
<dbReference type="ComplexPortal" id="CPX-1659">
    <property type="entry name" value="General transcription factor TFIIH complex"/>
</dbReference>
<dbReference type="DIP" id="DIP-5634N"/>
<dbReference type="FunCoup" id="Q12004">
    <property type="interactions" value="1346"/>
</dbReference>
<dbReference type="IntAct" id="Q12004">
    <property type="interactions" value="41"/>
</dbReference>
<dbReference type="MINT" id="Q12004"/>
<dbReference type="STRING" id="4932.YPR056W"/>
<dbReference type="iPTMnet" id="Q12004"/>
<dbReference type="PaxDb" id="4932-YPR056W"/>
<dbReference type="PeptideAtlas" id="Q12004"/>
<dbReference type="TopDownProteomics" id="Q12004"/>
<dbReference type="EnsemblFungi" id="YPR056W_mRNA">
    <property type="protein sequence ID" value="YPR056W"/>
    <property type="gene ID" value="YPR056W"/>
</dbReference>
<dbReference type="GeneID" id="856169"/>
<dbReference type="KEGG" id="sce:YPR056W"/>
<dbReference type="AGR" id="SGD:S000006260"/>
<dbReference type="SGD" id="S000006260">
    <property type="gene designation" value="TFB4"/>
</dbReference>
<dbReference type="VEuPathDB" id="FungiDB:YPR056W"/>
<dbReference type="eggNOG" id="KOG2487">
    <property type="taxonomic scope" value="Eukaryota"/>
</dbReference>
<dbReference type="GeneTree" id="ENSGT00390000013143"/>
<dbReference type="HOGENOM" id="CLU_040211_1_0_1"/>
<dbReference type="InParanoid" id="Q12004"/>
<dbReference type="OMA" id="QGCDITS"/>
<dbReference type="OrthoDB" id="17307at2759"/>
<dbReference type="BioCyc" id="YEAST:G3O-34208-MONOMER"/>
<dbReference type="Reactome" id="R-SCE-113418">
    <property type="pathway name" value="Formation of the Early Elongation Complex"/>
</dbReference>
<dbReference type="Reactome" id="R-SCE-674695">
    <property type="pathway name" value="RNA Polymerase II Pre-transcription Events"/>
</dbReference>
<dbReference type="Reactome" id="R-SCE-6781823">
    <property type="pathway name" value="Formation of TC-NER Pre-Incision Complex"/>
</dbReference>
<dbReference type="Reactome" id="R-SCE-6782135">
    <property type="pathway name" value="Dual incision in TC-NER"/>
</dbReference>
<dbReference type="Reactome" id="R-SCE-6782210">
    <property type="pathway name" value="Gap-filling DNA repair synthesis and ligation in TC-NER"/>
</dbReference>
<dbReference type="Reactome" id="R-SCE-6796648">
    <property type="pathway name" value="TP53 Regulates Transcription of DNA Repair Genes"/>
</dbReference>
<dbReference type="Reactome" id="R-SCE-72086">
    <property type="pathway name" value="mRNA Capping"/>
</dbReference>
<dbReference type="Reactome" id="R-SCE-73772">
    <property type="pathway name" value="RNA Polymerase I Promoter Escape"/>
</dbReference>
<dbReference type="Reactome" id="R-SCE-73776">
    <property type="pathway name" value="RNA Polymerase II Promoter Escape"/>
</dbReference>
<dbReference type="Reactome" id="R-SCE-73779">
    <property type="pathway name" value="RNA Polymerase II Transcription Pre-Initiation And Promoter Opening"/>
</dbReference>
<dbReference type="Reactome" id="R-SCE-75953">
    <property type="pathway name" value="RNA Polymerase II Transcription Initiation"/>
</dbReference>
<dbReference type="Reactome" id="R-SCE-76042">
    <property type="pathway name" value="RNA Polymerase II Transcription Initiation And Promoter Clearance"/>
</dbReference>
<dbReference type="Reactome" id="R-SCE-77075">
    <property type="pathway name" value="RNA Pol II CTD phosphorylation and interaction with CE"/>
</dbReference>
<dbReference type="BioGRID-ORCS" id="856169">
    <property type="hits" value="4 hits in 10 CRISPR screens"/>
</dbReference>
<dbReference type="PRO" id="PR:Q12004"/>
<dbReference type="Proteomes" id="UP000002311">
    <property type="component" value="Chromosome XVI"/>
</dbReference>
<dbReference type="RNAct" id="Q12004">
    <property type="molecule type" value="protein"/>
</dbReference>
<dbReference type="GO" id="GO:0000112">
    <property type="term" value="C:nucleotide-excision repair factor 3 complex"/>
    <property type="evidence" value="ECO:0000353"/>
    <property type="project" value="SGD"/>
</dbReference>
<dbReference type="GO" id="GO:0000439">
    <property type="term" value="C:transcription factor TFIIH core complex"/>
    <property type="evidence" value="ECO:0000314"/>
    <property type="project" value="SGD"/>
</dbReference>
<dbReference type="GO" id="GO:0005675">
    <property type="term" value="C:transcription factor TFIIH holo complex"/>
    <property type="evidence" value="ECO:0000314"/>
    <property type="project" value="SGD"/>
</dbReference>
<dbReference type="GO" id="GO:0008270">
    <property type="term" value="F:zinc ion binding"/>
    <property type="evidence" value="ECO:0007669"/>
    <property type="project" value="UniProtKB-KW"/>
</dbReference>
<dbReference type="GO" id="GO:0006289">
    <property type="term" value="P:nucleotide-excision repair"/>
    <property type="evidence" value="ECO:0000314"/>
    <property type="project" value="ComplexPortal"/>
</dbReference>
<dbReference type="GO" id="GO:0006355">
    <property type="term" value="P:regulation of DNA-templated transcription"/>
    <property type="evidence" value="ECO:0007669"/>
    <property type="project" value="InterPro"/>
</dbReference>
<dbReference type="GO" id="GO:0006366">
    <property type="term" value="P:transcription by RNA polymerase II"/>
    <property type="evidence" value="ECO:0000314"/>
    <property type="project" value="SGD"/>
</dbReference>
<dbReference type="GO" id="GO:0006367">
    <property type="term" value="P:transcription initiation at RNA polymerase II promoter"/>
    <property type="evidence" value="ECO:0000314"/>
    <property type="project" value="ComplexPortal"/>
</dbReference>
<dbReference type="FunFam" id="3.40.50.410:FF:000093">
    <property type="entry name" value="Transcription initiation factor TFIIH subunit"/>
    <property type="match status" value="1"/>
</dbReference>
<dbReference type="Gene3D" id="3.40.50.410">
    <property type="entry name" value="von Willebrand factor, type A domain"/>
    <property type="match status" value="1"/>
</dbReference>
<dbReference type="InterPro" id="IPR004600">
    <property type="entry name" value="TFIIH_Tfb4/GTF2H3"/>
</dbReference>
<dbReference type="InterPro" id="IPR036465">
    <property type="entry name" value="vWFA_dom_sf"/>
</dbReference>
<dbReference type="NCBIfam" id="TIGR00627">
    <property type="entry name" value="tfb4"/>
    <property type="match status" value="1"/>
</dbReference>
<dbReference type="PANTHER" id="PTHR12831:SF0">
    <property type="entry name" value="GENERAL TRANSCRIPTION FACTOR IIH SUBUNIT 3"/>
    <property type="match status" value="1"/>
</dbReference>
<dbReference type="PANTHER" id="PTHR12831">
    <property type="entry name" value="TRANSCRIPTION INITIATION FACTOR IIH TFIIH , POLYPEPTIDE 3-RELATED"/>
    <property type="match status" value="1"/>
</dbReference>
<dbReference type="Pfam" id="PF03850">
    <property type="entry name" value="Tfb4"/>
    <property type="match status" value="1"/>
</dbReference>
<gene>
    <name type="primary">TFB4</name>
    <name type="ordered locus">YPR056W</name>
</gene>
<feature type="chain" id="PRO_0000119275" description="General transcription and DNA repair factor IIH subunit TFB4">
    <location>
        <begin position="1"/>
        <end position="338"/>
    </location>
</feature>
<feature type="zinc finger region" description="C4-type">
    <location>
        <begin position="289"/>
        <end position="308"/>
    </location>
</feature>
<feature type="modified residue" description="N-acetylmethionine" evidence="38">
    <location>
        <position position="1"/>
    </location>
</feature>
<feature type="strand" evidence="41">
    <location>
        <begin position="24"/>
        <end position="31"/>
    </location>
</feature>
<feature type="helix" evidence="41">
    <location>
        <begin position="34"/>
        <end position="43"/>
    </location>
</feature>
<feature type="strand" evidence="39">
    <location>
        <begin position="46"/>
        <end position="48"/>
    </location>
</feature>
<feature type="helix" evidence="41">
    <location>
        <begin position="49"/>
        <end position="67"/>
    </location>
</feature>
<feature type="strand" evidence="41">
    <location>
        <begin position="73"/>
        <end position="79"/>
    </location>
</feature>
<feature type="strand" evidence="41">
    <location>
        <begin position="82"/>
        <end position="88"/>
    </location>
</feature>
<feature type="helix" evidence="42">
    <location>
        <begin position="91"/>
        <end position="96"/>
    </location>
</feature>
<feature type="helix" evidence="41">
    <location>
        <begin position="116"/>
        <end position="138"/>
    </location>
</feature>
<feature type="turn" evidence="41">
    <location>
        <begin position="139"/>
        <end position="141"/>
    </location>
</feature>
<feature type="strand" evidence="40">
    <location>
        <begin position="144"/>
        <end position="146"/>
    </location>
</feature>
<feature type="helix" evidence="41">
    <location>
        <begin position="149"/>
        <end position="166"/>
    </location>
</feature>
<feature type="strand" evidence="41">
    <location>
        <begin position="173"/>
        <end position="180"/>
    </location>
</feature>
<feature type="turn" evidence="42">
    <location>
        <begin position="183"/>
        <end position="185"/>
    </location>
</feature>
<feature type="helix" evidence="41">
    <location>
        <begin position="190"/>
        <end position="192"/>
    </location>
</feature>
<feature type="helix" evidence="41">
    <location>
        <begin position="193"/>
        <end position="205"/>
    </location>
</feature>
<feature type="strand" evidence="41">
    <location>
        <begin position="210"/>
        <end position="217"/>
    </location>
</feature>
<feature type="helix" evidence="41">
    <location>
        <begin position="222"/>
        <end position="230"/>
    </location>
</feature>
<feature type="strand" evidence="41">
    <location>
        <begin position="235"/>
        <end position="239"/>
    </location>
</feature>
<feature type="strand" evidence="39">
    <location>
        <begin position="240"/>
        <end position="242"/>
    </location>
</feature>
<feature type="helix" evidence="41">
    <location>
        <begin position="244"/>
        <end position="250"/>
    </location>
</feature>
<feature type="turn" evidence="41">
    <location>
        <begin position="251"/>
        <end position="253"/>
    </location>
</feature>
<feature type="helix" evidence="41">
    <location>
        <begin position="256"/>
        <end position="258"/>
    </location>
</feature>
<feature type="turn" evidence="41">
    <location>
        <begin position="259"/>
        <end position="261"/>
    </location>
</feature>
<feature type="strand" evidence="41">
    <location>
        <begin position="277"/>
        <end position="279"/>
    </location>
</feature>
<feature type="strand" evidence="41">
    <location>
        <begin position="284"/>
        <end position="289"/>
    </location>
</feature>
<feature type="turn" evidence="41">
    <location>
        <begin position="290"/>
        <end position="292"/>
    </location>
</feature>
<feature type="strand" evidence="41">
    <location>
        <begin position="295"/>
        <end position="298"/>
    </location>
</feature>
<feature type="helix" evidence="41">
    <location>
        <begin position="301"/>
        <end position="303"/>
    </location>
</feature>
<feature type="turn" evidence="41">
    <location>
        <begin position="306"/>
        <end position="308"/>
    </location>
</feature>
<feature type="helix" evidence="41">
    <location>
        <begin position="314"/>
        <end position="321"/>
    </location>
</feature>